<evidence type="ECO:0000255" key="1"/>
<evidence type="ECO:0000269" key="2">
    <source>
    </source>
</evidence>
<evidence type="ECO:0000269" key="3">
    <source>
    </source>
</evidence>
<evidence type="ECO:0000305" key="4"/>
<evidence type="ECO:0000305" key="5">
    <source>
    </source>
</evidence>
<dbReference type="EMBL" id="D17462">
    <property type="protein sequence ID" value="BAA04279.1"/>
    <property type="molecule type" value="Genomic_DNA"/>
</dbReference>
<dbReference type="EMBL" id="CP003504">
    <property type="protein sequence ID" value="AFM70582.1"/>
    <property type="status" value="ALT_INIT"/>
    <property type="molecule type" value="Genomic_DNA"/>
</dbReference>
<dbReference type="PIR" id="G53610">
    <property type="entry name" value="G53610"/>
</dbReference>
<dbReference type="SMR" id="P43440"/>
<dbReference type="TCDB" id="2.A.38.4.1">
    <property type="family name" value="the k(+) transporter (trk) family"/>
</dbReference>
<dbReference type="KEGG" id="ehr:EHR_08275"/>
<dbReference type="eggNOG" id="COG0168">
    <property type="taxonomic scope" value="Bacteria"/>
</dbReference>
<dbReference type="HOGENOM" id="CLU_026429_0_1_9"/>
<dbReference type="Proteomes" id="UP000002895">
    <property type="component" value="Chromosome"/>
</dbReference>
<dbReference type="GO" id="GO:0005886">
    <property type="term" value="C:plasma membrane"/>
    <property type="evidence" value="ECO:0007669"/>
    <property type="project" value="UniProtKB-SubCell"/>
</dbReference>
<dbReference type="GO" id="GO:0015379">
    <property type="term" value="F:potassium:chloride symporter activity"/>
    <property type="evidence" value="ECO:0007669"/>
    <property type="project" value="InterPro"/>
</dbReference>
<dbReference type="GO" id="GO:0006814">
    <property type="term" value="P:sodium ion transport"/>
    <property type="evidence" value="ECO:0007669"/>
    <property type="project" value="UniProtKB-KW"/>
</dbReference>
<dbReference type="InterPro" id="IPR003445">
    <property type="entry name" value="Cat_transpt"/>
</dbReference>
<dbReference type="InterPro" id="IPR004772">
    <property type="entry name" value="TrkH"/>
</dbReference>
<dbReference type="NCBIfam" id="TIGR00933">
    <property type="entry name" value="2a38"/>
    <property type="match status" value="1"/>
</dbReference>
<dbReference type="PANTHER" id="PTHR32024:SF1">
    <property type="entry name" value="KTR SYSTEM POTASSIUM UPTAKE PROTEIN B"/>
    <property type="match status" value="1"/>
</dbReference>
<dbReference type="PANTHER" id="PTHR32024">
    <property type="entry name" value="TRK SYSTEM POTASSIUM UPTAKE PROTEIN TRKG-RELATED"/>
    <property type="match status" value="1"/>
</dbReference>
<dbReference type="Pfam" id="PF02386">
    <property type="entry name" value="TrkH"/>
    <property type="match status" value="1"/>
</dbReference>
<comment type="function">
    <text evidence="2 3">Mediates electrogenic transport of potassium as well as sodium. Acts probably as a potassium-sodium cotransporter. Major sodium reentry pathway at high pH values.</text>
</comment>
<comment type="subcellular location">
    <subcellularLocation>
        <location evidence="4">Cell membrane</location>
        <topology evidence="4">Multi-pass membrane protein</topology>
    </subcellularLocation>
</comment>
<comment type="disruption phenotype">
    <text evidence="3">Mutants are defective in potassium accumulation at high pH and lack KtrII activity. Disruption does not affect Na(+)-ATPase activity.</text>
</comment>
<comment type="similarity">
    <text evidence="4">Belongs to the TrkH potassium transport family.</text>
</comment>
<comment type="caution">
    <text evidence="5">Was originally thought to be part of the V-type sodium ATP synthase.</text>
</comment>
<comment type="sequence caution" evidence="4">
    <conflict type="erroneous initiation">
        <sequence resource="EMBL-CDS" id="AFM70582"/>
    </conflict>
    <text>Truncated N-terminus.</text>
</comment>
<keyword id="KW-1003">Cell membrane</keyword>
<keyword id="KW-0406">Ion transport</keyword>
<keyword id="KW-0472">Membrane</keyword>
<keyword id="KW-0630">Potassium</keyword>
<keyword id="KW-0633">Potassium transport</keyword>
<keyword id="KW-0915">Sodium</keyword>
<keyword id="KW-0739">Sodium transport</keyword>
<keyword id="KW-0812">Transmembrane</keyword>
<keyword id="KW-1133">Transmembrane helix</keyword>
<keyword id="KW-0813">Transport</keyword>
<gene>
    <name type="primary">ntpJ</name>
    <name type="ordered locus">EHR_08275</name>
</gene>
<sequence length="451" mass="49249">MTIMKKRVRKRLSPVQLIAAGFFILILFGGSLLTLPFFSRSGESTHFIDALFTATSAVCVTGLTTLNTAEHWNSAGQFLIMTLIEIGGLGFMMIPILFFAIAKKKISFSMRIVLKEALNLEEMSGVIKLMIYILKFAVVIQVIGAVALSVVFIPEFGWAKGIWFSIFHAVSSFCNAGFDLLGDSLLADQTNVYLIMVVSALIIAGGLGFIVWRDILSYHRVKKITLHSKVALSVTALLLIGGFILFLITERNGLTLVKGTFTERLANTFFMSVTPRTAGYYSIDYLQMSHAGLILTMFLMYIGGTSGSTAGGLKTTTLGILLIQMHAMFKGKTRAEAFGRTIRQAAVLRALTLFFVTLSLCVVAIMVLSVTETIPKTSGIEYIAFEVFSAFGTVGLTMGLTPDLTLIGKLVIISLMYIGRVGIMTVVFSLLVKANRAEANYKYPEESIMLG</sequence>
<proteinExistence type="evidence at protein level"/>
<name>NTPJ_ENTHA</name>
<accession>P43440</accession>
<accession>I6SYN3</accession>
<reference key="1">
    <citation type="journal article" date="1994" name="J. Biol. Chem.">
        <title>Sequencing and characterization of the ntp gene cluster for vacuolar-type Na(+)-translocating ATPase of Enterococcus hirae.</title>
        <authorList>
            <person name="Takase K."/>
            <person name="Kakinuma S."/>
            <person name="Yamato I."/>
            <person name="Konishi K."/>
            <person name="Igarashi K."/>
            <person name="Kakinuma Y."/>
        </authorList>
    </citation>
    <scope>NUCLEOTIDE SEQUENCE [GENOMIC DNA]</scope>
    <source>
        <strain>ATCC 9790 / DSM 20160 / JCM 8729 / LMG 6399 / NBRC 3181 / NCIMB 6459 / NCDO 1258 / NCTC 12367 / WDCM 00089 / R</strain>
    </source>
</reference>
<reference key="2">
    <citation type="journal article" date="2012" name="J. Bacteriol.">
        <title>Genome sequence of Enterococcus hirae (Streptococcus faecalis) ATCC 9790, a model organism for the study of ion transport, bioenergetics, and copper homeostasis.</title>
        <authorList>
            <person name="Gaechter T."/>
            <person name="Wunderlin C."/>
            <person name="Schmidheini T."/>
            <person name="Solioz M."/>
        </authorList>
    </citation>
    <scope>NUCLEOTIDE SEQUENCE [LARGE SCALE GENOMIC DNA]</scope>
    <source>
        <strain>ATCC 9790 / DSM 20160 / JCM 8729 / LMG 6399 / NBRC 3181 / NCIMB 6459 / NCDO 1258 / NCTC 12367 / WDCM 00089 / R</strain>
    </source>
</reference>
<reference key="3">
    <citation type="journal article" date="1996" name="J. Biol. Chem.">
        <title>The ntpJ gene in the Enterococcus hirae ntp operon encodes a component of KtrII potassium transport system functionally independent of vacuolar Na+-ATPase.</title>
        <authorList>
            <person name="Murata T."/>
            <person name="Takase K."/>
            <person name="Yamato I."/>
            <person name="Igarashi K."/>
            <person name="Kakinuma Y."/>
        </authorList>
    </citation>
    <scope>FUNCTION</scope>
    <scope>DISRUPTION PHENOTYPE</scope>
    <source>
        <strain>ATCC 9790 / DSM 20160 / JCM 8729 / LMG 6399 / NBRC 3181 / NCIMB 6459 / NCDO 1258 / NCTC 12367 / WDCM 00089 / R</strain>
    </source>
</reference>
<reference key="4">
    <citation type="journal article" date="2000" name="J. Bacteriol.">
        <title>Evidence for Na(+) influx via the NtpJ protein of the KtrII K(+) uptake system in Enterococcus hirae.</title>
        <authorList>
            <person name="Kawano M."/>
            <person name="Abuki R."/>
            <person name="Igarashi K."/>
            <person name="Kakinuma Y."/>
        </authorList>
    </citation>
    <scope>FUNCTION AS A POTASSIUM AND SODIUM TRANSPORTER</scope>
    <source>
        <strain>ATCC 9790 / DSM 20160 / JCM 8729 / LMG 6399 / NBRC 3181 / NCIMB 6459 / NCDO 1258 / NCTC 12367 / WDCM 00089 / R</strain>
    </source>
</reference>
<protein>
    <recommendedName>
        <fullName>Potassium/sodium uptake protein NtpJ</fullName>
    </recommendedName>
    <alternativeName>
        <fullName>K(+):Na(+) symporter</fullName>
    </alternativeName>
</protein>
<organism>
    <name type="scientific">Enterococcus hirae (strain ATCC 9790 / DSM 20160 / JCM 8729 / LMG 6399 / NBRC 3181 / NCIMB 6459 / NCDO 1258 / NCTC 12367 / WDCM 00089 / R)</name>
    <dbReference type="NCBI Taxonomy" id="768486"/>
    <lineage>
        <taxon>Bacteria</taxon>
        <taxon>Bacillati</taxon>
        <taxon>Bacillota</taxon>
        <taxon>Bacilli</taxon>
        <taxon>Lactobacillales</taxon>
        <taxon>Enterococcaceae</taxon>
        <taxon>Enterococcus</taxon>
    </lineage>
</organism>
<feature type="chain" id="PRO_0000070480" description="Potassium/sodium uptake protein NtpJ">
    <location>
        <begin position="1"/>
        <end position="451"/>
    </location>
</feature>
<feature type="transmembrane region" description="Helical" evidence="1">
    <location>
        <begin position="18"/>
        <end position="38"/>
    </location>
</feature>
<feature type="transmembrane region" description="Helical" evidence="1">
    <location>
        <begin position="46"/>
        <end position="66"/>
    </location>
</feature>
<feature type="transmembrane region" description="Helical" evidence="1">
    <location>
        <begin position="78"/>
        <end position="98"/>
    </location>
</feature>
<feature type="transmembrane region" description="Helical" evidence="1">
    <location>
        <begin position="133"/>
        <end position="153"/>
    </location>
</feature>
<feature type="transmembrane region" description="Helical" evidence="1">
    <location>
        <begin position="162"/>
        <end position="182"/>
    </location>
</feature>
<feature type="transmembrane region" description="Helical" evidence="1">
    <location>
        <begin position="192"/>
        <end position="212"/>
    </location>
</feature>
<feature type="transmembrane region" description="Helical" evidence="1">
    <location>
        <begin position="230"/>
        <end position="250"/>
    </location>
</feature>
<feature type="transmembrane region" description="Helical" evidence="1">
    <location>
        <begin position="293"/>
        <end position="313"/>
    </location>
</feature>
<feature type="transmembrane region" description="Helical" evidence="1">
    <location>
        <begin position="350"/>
        <end position="370"/>
    </location>
</feature>
<feature type="transmembrane region" description="Helical" evidence="1">
    <location>
        <begin position="380"/>
        <end position="400"/>
    </location>
</feature>
<feature type="transmembrane region" description="Helical" evidence="1">
    <location>
        <begin position="410"/>
        <end position="430"/>
    </location>
</feature>
<feature type="sequence conflict" description="In Ref. 1; BAA04279." evidence="4" ref="1">
    <original>F</original>
    <variation>L</variation>
    <location>
        <position position="428"/>
    </location>
</feature>